<gene>
    <name type="primary">tufA</name>
</gene>
<accession>P19457</accession>
<reference key="1">
    <citation type="journal article" date="1991" name="Curr. Genet.">
        <title>Unusual organization of a ribosomal protein operon in the plastid genome of Cryptomonas phi: evolutionary considerations.</title>
        <authorList>
            <person name="Douglas S.E."/>
        </authorList>
    </citation>
    <scope>NUCLEOTIDE SEQUENCE [GENOMIC DNA]</scope>
</reference>
<reference key="2">
    <citation type="journal article" date="1997" name="Biochem. Mol. Biol. Int.">
        <title>The large ribosomal protein gene cluster of a cryptomonad plastid: gene organization, sequence and evolutionary implications.</title>
        <authorList>
            <person name="Wang S.L."/>
            <person name="Liu X.-Q."/>
            <person name="Douglas S.E."/>
        </authorList>
    </citation>
    <scope>NUCLEOTIDE SEQUENCE [GENOMIC DNA]</scope>
</reference>
<name>EFTU_GUITH</name>
<protein>
    <recommendedName>
        <fullName>Elongation factor Tu, chloroplastic</fullName>
        <shortName>EF-Tu</shortName>
        <ecNumber evidence="2">3.6.5.3</ecNumber>
    </recommendedName>
</protein>
<comment type="function">
    <text evidence="2">GTP hydrolase that promotes the GTP-dependent binding of aminoacyl-tRNA to the A-site of ribosomes during protein biosynthesis.</text>
</comment>
<comment type="catalytic activity">
    <reaction evidence="2">
        <text>GTP + H2O = GDP + phosphate + H(+)</text>
        <dbReference type="Rhea" id="RHEA:19669"/>
        <dbReference type="ChEBI" id="CHEBI:15377"/>
        <dbReference type="ChEBI" id="CHEBI:15378"/>
        <dbReference type="ChEBI" id="CHEBI:37565"/>
        <dbReference type="ChEBI" id="CHEBI:43474"/>
        <dbReference type="ChEBI" id="CHEBI:58189"/>
        <dbReference type="EC" id="3.6.5.3"/>
    </reaction>
    <physiologicalReaction direction="left-to-right" evidence="2">
        <dbReference type="Rhea" id="RHEA:19670"/>
    </physiologicalReaction>
</comment>
<comment type="subcellular location">
    <subcellularLocation>
        <location>Plastid</location>
        <location>Chloroplast</location>
    </subcellularLocation>
</comment>
<comment type="similarity">
    <text evidence="3">Belongs to the TRAFAC class translation factor GTPase superfamily. Classic translation factor GTPase family. EF-Tu/EF-1A subfamily.</text>
</comment>
<evidence type="ECO:0000250" key="1"/>
<evidence type="ECO:0000255" key="2">
    <source>
        <dbReference type="HAMAP-Rule" id="MF_00118"/>
    </source>
</evidence>
<evidence type="ECO:0000305" key="3"/>
<geneLocation type="chloroplast"/>
<dbReference type="EC" id="3.6.5.3" evidence="2"/>
<dbReference type="EMBL" id="AF041468">
    <property type="protein sequence ID" value="AAC35730.1"/>
    <property type="molecule type" value="Genomic_DNA"/>
</dbReference>
<dbReference type="RefSeq" id="NP_050796.1">
    <property type="nucleotide sequence ID" value="NC_000926.1"/>
</dbReference>
<dbReference type="SMR" id="P19457"/>
<dbReference type="GeneID" id="857104"/>
<dbReference type="HOGENOM" id="CLU_007265_0_0_1"/>
<dbReference type="OMA" id="KTHANIG"/>
<dbReference type="GO" id="GO:0009507">
    <property type="term" value="C:chloroplast"/>
    <property type="evidence" value="ECO:0007669"/>
    <property type="project" value="UniProtKB-SubCell"/>
</dbReference>
<dbReference type="GO" id="GO:0005829">
    <property type="term" value="C:cytosol"/>
    <property type="evidence" value="ECO:0007669"/>
    <property type="project" value="TreeGrafter"/>
</dbReference>
<dbReference type="GO" id="GO:0005525">
    <property type="term" value="F:GTP binding"/>
    <property type="evidence" value="ECO:0007669"/>
    <property type="project" value="UniProtKB-UniRule"/>
</dbReference>
<dbReference type="GO" id="GO:0003924">
    <property type="term" value="F:GTPase activity"/>
    <property type="evidence" value="ECO:0007669"/>
    <property type="project" value="InterPro"/>
</dbReference>
<dbReference type="GO" id="GO:0003746">
    <property type="term" value="F:translation elongation factor activity"/>
    <property type="evidence" value="ECO:0007669"/>
    <property type="project" value="UniProtKB-UniRule"/>
</dbReference>
<dbReference type="CDD" id="cd01884">
    <property type="entry name" value="EF_Tu"/>
    <property type="match status" value="1"/>
</dbReference>
<dbReference type="CDD" id="cd03697">
    <property type="entry name" value="EFTU_II"/>
    <property type="match status" value="1"/>
</dbReference>
<dbReference type="CDD" id="cd03707">
    <property type="entry name" value="EFTU_III"/>
    <property type="match status" value="1"/>
</dbReference>
<dbReference type="FunFam" id="2.40.30.10:FF:000001">
    <property type="entry name" value="Elongation factor Tu"/>
    <property type="match status" value="1"/>
</dbReference>
<dbReference type="FunFam" id="2.40.30.10:FF:000046">
    <property type="entry name" value="Elongation factor Tu"/>
    <property type="match status" value="1"/>
</dbReference>
<dbReference type="FunFam" id="3.40.50.300:FF:000003">
    <property type="entry name" value="Elongation factor Tu"/>
    <property type="match status" value="1"/>
</dbReference>
<dbReference type="Gene3D" id="3.40.50.300">
    <property type="entry name" value="P-loop containing nucleotide triphosphate hydrolases"/>
    <property type="match status" value="1"/>
</dbReference>
<dbReference type="Gene3D" id="2.40.30.10">
    <property type="entry name" value="Translation factors"/>
    <property type="match status" value="2"/>
</dbReference>
<dbReference type="HAMAP" id="MF_00118_B">
    <property type="entry name" value="EF_Tu_B"/>
    <property type="match status" value="1"/>
</dbReference>
<dbReference type="InterPro" id="IPR041709">
    <property type="entry name" value="EF-Tu_GTP-bd"/>
</dbReference>
<dbReference type="InterPro" id="IPR050055">
    <property type="entry name" value="EF-Tu_GTPase"/>
</dbReference>
<dbReference type="InterPro" id="IPR004161">
    <property type="entry name" value="EFTu-like_2"/>
</dbReference>
<dbReference type="InterPro" id="IPR033720">
    <property type="entry name" value="EFTU_2"/>
</dbReference>
<dbReference type="InterPro" id="IPR031157">
    <property type="entry name" value="G_TR_CS"/>
</dbReference>
<dbReference type="InterPro" id="IPR027417">
    <property type="entry name" value="P-loop_NTPase"/>
</dbReference>
<dbReference type="InterPro" id="IPR005225">
    <property type="entry name" value="Small_GTP-bd"/>
</dbReference>
<dbReference type="InterPro" id="IPR000795">
    <property type="entry name" value="T_Tr_GTP-bd_dom"/>
</dbReference>
<dbReference type="InterPro" id="IPR009000">
    <property type="entry name" value="Transl_B-barrel_sf"/>
</dbReference>
<dbReference type="InterPro" id="IPR009001">
    <property type="entry name" value="Transl_elong_EF1A/Init_IF2_C"/>
</dbReference>
<dbReference type="InterPro" id="IPR004541">
    <property type="entry name" value="Transl_elong_EFTu/EF1A_bac/org"/>
</dbReference>
<dbReference type="InterPro" id="IPR004160">
    <property type="entry name" value="Transl_elong_EFTu/EF1A_C"/>
</dbReference>
<dbReference type="NCBIfam" id="TIGR00485">
    <property type="entry name" value="EF-Tu"/>
    <property type="match status" value="1"/>
</dbReference>
<dbReference type="NCBIfam" id="NF000766">
    <property type="entry name" value="PRK00049.1"/>
    <property type="match status" value="1"/>
</dbReference>
<dbReference type="NCBIfam" id="NF009372">
    <property type="entry name" value="PRK12735.1"/>
    <property type="match status" value="1"/>
</dbReference>
<dbReference type="NCBIfam" id="NF009373">
    <property type="entry name" value="PRK12736.1"/>
    <property type="match status" value="1"/>
</dbReference>
<dbReference type="NCBIfam" id="TIGR00231">
    <property type="entry name" value="small_GTP"/>
    <property type="match status" value="1"/>
</dbReference>
<dbReference type="PANTHER" id="PTHR43721:SF22">
    <property type="entry name" value="ELONGATION FACTOR TU, MITOCHONDRIAL"/>
    <property type="match status" value="1"/>
</dbReference>
<dbReference type="PANTHER" id="PTHR43721">
    <property type="entry name" value="ELONGATION FACTOR TU-RELATED"/>
    <property type="match status" value="1"/>
</dbReference>
<dbReference type="Pfam" id="PF00009">
    <property type="entry name" value="GTP_EFTU"/>
    <property type="match status" value="1"/>
</dbReference>
<dbReference type="Pfam" id="PF03144">
    <property type="entry name" value="GTP_EFTU_D2"/>
    <property type="match status" value="1"/>
</dbReference>
<dbReference type="Pfam" id="PF03143">
    <property type="entry name" value="GTP_EFTU_D3"/>
    <property type="match status" value="1"/>
</dbReference>
<dbReference type="PRINTS" id="PR00315">
    <property type="entry name" value="ELONGATNFCT"/>
</dbReference>
<dbReference type="SUPFAM" id="SSF50465">
    <property type="entry name" value="EF-Tu/eEF-1alpha/eIF2-gamma C-terminal domain"/>
    <property type="match status" value="1"/>
</dbReference>
<dbReference type="SUPFAM" id="SSF52540">
    <property type="entry name" value="P-loop containing nucleoside triphosphate hydrolases"/>
    <property type="match status" value="1"/>
</dbReference>
<dbReference type="SUPFAM" id="SSF50447">
    <property type="entry name" value="Translation proteins"/>
    <property type="match status" value="1"/>
</dbReference>
<dbReference type="PROSITE" id="PS00301">
    <property type="entry name" value="G_TR_1"/>
    <property type="match status" value="1"/>
</dbReference>
<dbReference type="PROSITE" id="PS51722">
    <property type="entry name" value="G_TR_2"/>
    <property type="match status" value="1"/>
</dbReference>
<proteinExistence type="inferred from homology"/>
<keyword id="KW-0150">Chloroplast</keyword>
<keyword id="KW-0251">Elongation factor</keyword>
<keyword id="KW-0342">GTP-binding</keyword>
<keyword id="KW-0378">Hydrolase</keyword>
<keyword id="KW-0460">Magnesium</keyword>
<keyword id="KW-0479">Metal-binding</keyword>
<keyword id="KW-0547">Nucleotide-binding</keyword>
<keyword id="KW-0934">Plastid</keyword>
<keyword id="KW-0648">Protein biosynthesis</keyword>
<organism>
    <name type="scientific">Guillardia theta</name>
    <name type="common">Cryptophyte</name>
    <name type="synonym">Cryptomonas phi</name>
    <dbReference type="NCBI Taxonomy" id="55529"/>
    <lineage>
        <taxon>Eukaryota</taxon>
        <taxon>Cryptophyceae</taxon>
        <taxon>Pyrenomonadales</taxon>
        <taxon>Geminigeraceae</taxon>
        <taxon>Guillardia</taxon>
    </lineage>
</organism>
<sequence length="408" mass="44827">MARDKFERSKPHVNIGTIGHVDHGKTTLTAAISATLSQYTGKSKKFDEIDSAPEERARGITINTAHVEYETDKWYYAHVDCPGHADYVKNMITGAAQMDGAILVCSAANGPMPQTREHILLAKQVGVPYIVVFLNKADMVDDEELLELVQLEVQELLEKYDFPGSEIPFVAGSALLALEAVANNPTIKRGEDKWVDTIYQLMDKVDEYIPTPERETDKAFLMAVEDVFSITGRGTVATGRIERGKVKVGDTIEIVGLRETRNTTITGLEMFQKSLDEALAGDNVGILVRGIQKTDIERGMVLAAPGSITPHTKFEGEVYVLTKEEGGRHTPFFSGYRPQFYVRTTDVTGTIAQFTSDDGSTAEMVMPGDRIKMTAQLIHPIAIEKGMRFAIREGGRTVGAGVVSKIIE</sequence>
<feature type="chain" id="PRO_0000091462" description="Elongation factor Tu, chloroplastic">
    <location>
        <begin position="1"/>
        <end position="408"/>
    </location>
</feature>
<feature type="domain" description="tr-type G">
    <location>
        <begin position="10"/>
        <end position="213"/>
    </location>
</feature>
<feature type="region of interest" description="G1" evidence="1">
    <location>
        <begin position="19"/>
        <end position="26"/>
    </location>
</feature>
<feature type="region of interest" description="G2" evidence="1">
    <location>
        <begin position="59"/>
        <end position="63"/>
    </location>
</feature>
<feature type="region of interest" description="G3" evidence="1">
    <location>
        <begin position="80"/>
        <end position="83"/>
    </location>
</feature>
<feature type="region of interest" description="G4" evidence="1">
    <location>
        <begin position="135"/>
        <end position="138"/>
    </location>
</feature>
<feature type="region of interest" description="G5" evidence="1">
    <location>
        <begin position="173"/>
        <end position="175"/>
    </location>
</feature>
<feature type="binding site" evidence="1">
    <location>
        <begin position="19"/>
        <end position="26"/>
    </location>
    <ligand>
        <name>GTP</name>
        <dbReference type="ChEBI" id="CHEBI:37565"/>
    </ligand>
</feature>
<feature type="binding site" evidence="2">
    <location>
        <position position="26"/>
    </location>
    <ligand>
        <name>Mg(2+)</name>
        <dbReference type="ChEBI" id="CHEBI:18420"/>
    </ligand>
</feature>
<feature type="binding site" evidence="1">
    <location>
        <begin position="80"/>
        <end position="84"/>
    </location>
    <ligand>
        <name>GTP</name>
        <dbReference type="ChEBI" id="CHEBI:37565"/>
    </ligand>
</feature>
<feature type="binding site" evidence="1">
    <location>
        <begin position="135"/>
        <end position="138"/>
    </location>
    <ligand>
        <name>GTP</name>
        <dbReference type="ChEBI" id="CHEBI:37565"/>
    </ligand>
</feature>